<gene>
    <name evidence="1" type="primary">hfq</name>
    <name type="ordered locus">Clos_1551</name>
</gene>
<name>HFQ_ALKOO</name>
<feature type="chain" id="PRO_1000060236" description="RNA-binding protein Hfq">
    <location>
        <begin position="1"/>
        <end position="80"/>
    </location>
</feature>
<feature type="domain" description="Sm" evidence="2">
    <location>
        <begin position="9"/>
        <end position="69"/>
    </location>
</feature>
<proteinExistence type="inferred from homology"/>
<comment type="function">
    <text evidence="1">RNA chaperone that binds small regulatory RNA (sRNAs) and mRNAs to facilitate mRNA translational regulation in response to envelope stress, environmental stress and changes in metabolite concentrations. Also binds with high specificity to tRNAs.</text>
</comment>
<comment type="subunit">
    <text evidence="1">Homohexamer.</text>
</comment>
<comment type="similarity">
    <text evidence="1">Belongs to the Hfq family.</text>
</comment>
<protein>
    <recommendedName>
        <fullName evidence="1">RNA-binding protein Hfq</fullName>
    </recommendedName>
</protein>
<accession>A8MFD1</accession>
<keyword id="KW-1185">Reference proteome</keyword>
<keyword id="KW-0694">RNA-binding</keyword>
<keyword id="KW-0346">Stress response</keyword>
<evidence type="ECO:0000255" key="1">
    <source>
        <dbReference type="HAMAP-Rule" id="MF_00436"/>
    </source>
</evidence>
<evidence type="ECO:0000255" key="2">
    <source>
        <dbReference type="PROSITE-ProRule" id="PRU01346"/>
    </source>
</evidence>
<dbReference type="EMBL" id="CP000853">
    <property type="protein sequence ID" value="ABW19094.1"/>
    <property type="molecule type" value="Genomic_DNA"/>
</dbReference>
<dbReference type="RefSeq" id="WP_012159406.1">
    <property type="nucleotide sequence ID" value="NC_009922.1"/>
</dbReference>
<dbReference type="SMR" id="A8MFD1"/>
<dbReference type="STRING" id="350688.Clos_1551"/>
<dbReference type="KEGG" id="aoe:Clos_1551"/>
<dbReference type="eggNOG" id="COG1923">
    <property type="taxonomic scope" value="Bacteria"/>
</dbReference>
<dbReference type="HOGENOM" id="CLU_113688_0_2_9"/>
<dbReference type="OrthoDB" id="9799751at2"/>
<dbReference type="Proteomes" id="UP000000269">
    <property type="component" value="Chromosome"/>
</dbReference>
<dbReference type="GO" id="GO:0005829">
    <property type="term" value="C:cytosol"/>
    <property type="evidence" value="ECO:0007669"/>
    <property type="project" value="TreeGrafter"/>
</dbReference>
<dbReference type="GO" id="GO:0003723">
    <property type="term" value="F:RNA binding"/>
    <property type="evidence" value="ECO:0007669"/>
    <property type="project" value="UniProtKB-UniRule"/>
</dbReference>
<dbReference type="GO" id="GO:0006355">
    <property type="term" value="P:regulation of DNA-templated transcription"/>
    <property type="evidence" value="ECO:0007669"/>
    <property type="project" value="InterPro"/>
</dbReference>
<dbReference type="GO" id="GO:0043487">
    <property type="term" value="P:regulation of RNA stability"/>
    <property type="evidence" value="ECO:0007669"/>
    <property type="project" value="TreeGrafter"/>
</dbReference>
<dbReference type="GO" id="GO:0045974">
    <property type="term" value="P:regulation of translation, ncRNA-mediated"/>
    <property type="evidence" value="ECO:0007669"/>
    <property type="project" value="TreeGrafter"/>
</dbReference>
<dbReference type="CDD" id="cd01716">
    <property type="entry name" value="Hfq"/>
    <property type="match status" value="1"/>
</dbReference>
<dbReference type="FunFam" id="2.30.30.100:FF:000012">
    <property type="entry name" value="RNA-binding protein Hfq"/>
    <property type="match status" value="1"/>
</dbReference>
<dbReference type="Gene3D" id="2.30.30.100">
    <property type="match status" value="1"/>
</dbReference>
<dbReference type="HAMAP" id="MF_00436">
    <property type="entry name" value="Hfq"/>
    <property type="match status" value="1"/>
</dbReference>
<dbReference type="InterPro" id="IPR005001">
    <property type="entry name" value="Hfq"/>
</dbReference>
<dbReference type="InterPro" id="IPR010920">
    <property type="entry name" value="LSM_dom_sf"/>
</dbReference>
<dbReference type="InterPro" id="IPR047575">
    <property type="entry name" value="Sm"/>
</dbReference>
<dbReference type="NCBIfam" id="TIGR02383">
    <property type="entry name" value="Hfq"/>
    <property type="match status" value="1"/>
</dbReference>
<dbReference type="NCBIfam" id="NF001602">
    <property type="entry name" value="PRK00395.1"/>
    <property type="match status" value="1"/>
</dbReference>
<dbReference type="PANTHER" id="PTHR34772">
    <property type="entry name" value="RNA-BINDING PROTEIN HFQ"/>
    <property type="match status" value="1"/>
</dbReference>
<dbReference type="PANTHER" id="PTHR34772:SF1">
    <property type="entry name" value="RNA-BINDING PROTEIN HFQ"/>
    <property type="match status" value="1"/>
</dbReference>
<dbReference type="Pfam" id="PF17209">
    <property type="entry name" value="Hfq"/>
    <property type="match status" value="1"/>
</dbReference>
<dbReference type="SUPFAM" id="SSF50182">
    <property type="entry name" value="Sm-like ribonucleoproteins"/>
    <property type="match status" value="1"/>
</dbReference>
<dbReference type="PROSITE" id="PS52002">
    <property type="entry name" value="SM"/>
    <property type="match status" value="1"/>
</dbReference>
<reference key="1">
    <citation type="submission" date="2007-10" db="EMBL/GenBank/DDBJ databases">
        <title>Complete genome of Alkaliphilus oremlandii OhILAs.</title>
        <authorList>
            <person name="Copeland A."/>
            <person name="Lucas S."/>
            <person name="Lapidus A."/>
            <person name="Barry K."/>
            <person name="Detter J.C."/>
            <person name="Glavina del Rio T."/>
            <person name="Hammon N."/>
            <person name="Israni S."/>
            <person name="Dalin E."/>
            <person name="Tice H."/>
            <person name="Pitluck S."/>
            <person name="Chain P."/>
            <person name="Malfatti S."/>
            <person name="Shin M."/>
            <person name="Vergez L."/>
            <person name="Schmutz J."/>
            <person name="Larimer F."/>
            <person name="Land M."/>
            <person name="Hauser L."/>
            <person name="Kyrpides N."/>
            <person name="Mikhailova N."/>
            <person name="Stolz J.F."/>
            <person name="Dawson A."/>
            <person name="Fisher E."/>
            <person name="Crable B."/>
            <person name="Perera E."/>
            <person name="Lisak J."/>
            <person name="Ranganathan M."/>
            <person name="Basu P."/>
            <person name="Richardson P."/>
        </authorList>
    </citation>
    <scope>NUCLEOTIDE SEQUENCE [LARGE SCALE GENOMIC DNA]</scope>
    <source>
        <strain>OhILAs</strain>
    </source>
</reference>
<organism>
    <name type="scientific">Alkaliphilus oremlandii (strain OhILAs)</name>
    <name type="common">Clostridium oremlandii (strain OhILAs)</name>
    <dbReference type="NCBI Taxonomy" id="350688"/>
    <lineage>
        <taxon>Bacteria</taxon>
        <taxon>Bacillati</taxon>
        <taxon>Bacillota</taxon>
        <taxon>Clostridia</taxon>
        <taxon>Peptostreptococcales</taxon>
        <taxon>Natronincolaceae</taxon>
        <taxon>Alkaliphilus</taxon>
    </lineage>
</organism>
<sequence>MKNNINLQDVFLNQVRKENIGITIFLVNGFQLKGFVRGFDNYTIVLDSDGKQQMIYKHAVSTISPNSPVNFSAALKKIND</sequence>